<proteinExistence type="inferred from homology"/>
<feature type="chain" id="PRO_1000018062" description="Arginine--tRNA ligase">
    <location>
        <begin position="1"/>
        <end position="566"/>
    </location>
</feature>
<feature type="short sequence motif" description="'HIGH' region">
    <location>
        <begin position="121"/>
        <end position="131"/>
    </location>
</feature>
<comment type="catalytic activity">
    <reaction evidence="1">
        <text>tRNA(Arg) + L-arginine + ATP = L-arginyl-tRNA(Arg) + AMP + diphosphate</text>
        <dbReference type="Rhea" id="RHEA:20301"/>
        <dbReference type="Rhea" id="RHEA-COMP:9658"/>
        <dbReference type="Rhea" id="RHEA-COMP:9673"/>
        <dbReference type="ChEBI" id="CHEBI:30616"/>
        <dbReference type="ChEBI" id="CHEBI:32682"/>
        <dbReference type="ChEBI" id="CHEBI:33019"/>
        <dbReference type="ChEBI" id="CHEBI:78442"/>
        <dbReference type="ChEBI" id="CHEBI:78513"/>
        <dbReference type="ChEBI" id="CHEBI:456215"/>
        <dbReference type="EC" id="6.1.1.19"/>
    </reaction>
</comment>
<comment type="subcellular location">
    <subcellularLocation>
        <location evidence="1">Cytoplasm</location>
    </subcellularLocation>
</comment>
<comment type="similarity">
    <text evidence="1">Belongs to the class-I aminoacyl-tRNA synthetase family.</text>
</comment>
<keyword id="KW-0030">Aminoacyl-tRNA synthetase</keyword>
<keyword id="KW-0067">ATP-binding</keyword>
<keyword id="KW-0963">Cytoplasm</keyword>
<keyword id="KW-0436">Ligase</keyword>
<keyword id="KW-0547">Nucleotide-binding</keyword>
<keyword id="KW-0648">Protein biosynthesis</keyword>
<reference key="1">
    <citation type="submission" date="2007-03" db="EMBL/GenBank/DDBJ databases">
        <title>Complete sequence of chromosome of Methanococcus maripaludis C5.</title>
        <authorList>
            <consortium name="US DOE Joint Genome Institute"/>
            <person name="Copeland A."/>
            <person name="Lucas S."/>
            <person name="Lapidus A."/>
            <person name="Barry K."/>
            <person name="Glavina del Rio T."/>
            <person name="Dalin E."/>
            <person name="Tice H."/>
            <person name="Pitluck S."/>
            <person name="Chertkov O."/>
            <person name="Brettin T."/>
            <person name="Bruce D."/>
            <person name="Han C."/>
            <person name="Detter J.C."/>
            <person name="Schmutz J."/>
            <person name="Larimer F."/>
            <person name="Land M."/>
            <person name="Hauser L."/>
            <person name="Kyrpides N."/>
            <person name="Mikhailova N."/>
            <person name="Sieprawska-Lupa M."/>
            <person name="Whitman W.B."/>
            <person name="Richardson P."/>
        </authorList>
    </citation>
    <scope>NUCLEOTIDE SEQUENCE [LARGE SCALE GENOMIC DNA]</scope>
    <source>
        <strain>C5 / ATCC BAA-1333</strain>
    </source>
</reference>
<protein>
    <recommendedName>
        <fullName evidence="1">Arginine--tRNA ligase</fullName>
        <ecNumber evidence="1">6.1.1.19</ecNumber>
    </recommendedName>
    <alternativeName>
        <fullName evidence="1">Arginyl-tRNA synthetase</fullName>
        <shortName evidence="1">ArgRS</shortName>
    </alternativeName>
</protein>
<name>SYR_METM5</name>
<sequence length="566" mass="64359">MDVENLIITTLKDKVRELTGNEMDIRLDEPPAINMGDYSTNISFRLAKDLKKAPKMIAEDIANSLSILGIEKIEAVNGYINFFMNYSDFSKETVSKISAEKENFGKLEKRDEKVILEHTSANPNGPFHIGHGRNMVIGDSLKRILIASGYDVETQYYVNDMGRQEAIVVFGNERFELDKSKKADHAIGEVYVETNKLLAENEELEQEILNLMKNYEEACEAGIENELTEKFKNAVDYSLGGFKETLSTLNIYHDKFVWESEFVKSGMVRDVIKRLMDTGKVVEDEVFRLDLSDYGLEKKLVLARLNGTSLYSTRDIVYHINKMENCDFAVNLLGADHKLTAVMVNKTLALLGYNEAEVVFYEFISLPEGSMSTRRGRFISMDELFEEAKSRAAEEVRKRGVAENEEEIEEIAKRIAVGAVRYNIVRIAPEKPMVFRWDEALDFEKVGCPVIQYAHARCSRILENVETISNDNLFAYEMNENEKTIVKLLSKLPKIVEKAAEVRKPQIVANYVLDVAQGFNKFYANCPVLKEENETIKNSRLAIVNTTKTVLENTLDLLGIEMPGKM</sequence>
<dbReference type="EC" id="6.1.1.19" evidence="1"/>
<dbReference type="EMBL" id="CP000609">
    <property type="protein sequence ID" value="ABO34882.1"/>
    <property type="molecule type" value="Genomic_DNA"/>
</dbReference>
<dbReference type="RefSeq" id="WP_011868336.1">
    <property type="nucleotide sequence ID" value="NC_009135.1"/>
</dbReference>
<dbReference type="SMR" id="A4FXF3"/>
<dbReference type="STRING" id="402880.MmarC5_0568"/>
<dbReference type="GeneID" id="4929211"/>
<dbReference type="KEGG" id="mmq:MmarC5_0568"/>
<dbReference type="eggNOG" id="arCOG00487">
    <property type="taxonomic scope" value="Archaea"/>
</dbReference>
<dbReference type="HOGENOM" id="CLU_006406_6_1_2"/>
<dbReference type="OrthoDB" id="372102at2157"/>
<dbReference type="Proteomes" id="UP000000253">
    <property type="component" value="Chromosome"/>
</dbReference>
<dbReference type="GO" id="GO:0005737">
    <property type="term" value="C:cytoplasm"/>
    <property type="evidence" value="ECO:0007669"/>
    <property type="project" value="UniProtKB-SubCell"/>
</dbReference>
<dbReference type="GO" id="GO:0004814">
    <property type="term" value="F:arginine-tRNA ligase activity"/>
    <property type="evidence" value="ECO:0007669"/>
    <property type="project" value="UniProtKB-UniRule"/>
</dbReference>
<dbReference type="GO" id="GO:0005524">
    <property type="term" value="F:ATP binding"/>
    <property type="evidence" value="ECO:0007669"/>
    <property type="project" value="UniProtKB-UniRule"/>
</dbReference>
<dbReference type="GO" id="GO:0006420">
    <property type="term" value="P:arginyl-tRNA aminoacylation"/>
    <property type="evidence" value="ECO:0007669"/>
    <property type="project" value="UniProtKB-UniRule"/>
</dbReference>
<dbReference type="CDD" id="cd00671">
    <property type="entry name" value="ArgRS_core"/>
    <property type="match status" value="1"/>
</dbReference>
<dbReference type="Gene3D" id="3.30.1360.70">
    <property type="entry name" value="Arginyl tRNA synthetase N-terminal domain"/>
    <property type="match status" value="1"/>
</dbReference>
<dbReference type="Gene3D" id="3.40.50.620">
    <property type="entry name" value="HUPs"/>
    <property type="match status" value="1"/>
</dbReference>
<dbReference type="Gene3D" id="1.10.730.10">
    <property type="entry name" value="Isoleucyl-tRNA Synthetase, Domain 1"/>
    <property type="match status" value="1"/>
</dbReference>
<dbReference type="HAMAP" id="MF_00123">
    <property type="entry name" value="Arg_tRNA_synth"/>
    <property type="match status" value="1"/>
</dbReference>
<dbReference type="InterPro" id="IPR001412">
    <property type="entry name" value="aa-tRNA-synth_I_CS"/>
</dbReference>
<dbReference type="InterPro" id="IPR001278">
    <property type="entry name" value="Arg-tRNA-ligase"/>
</dbReference>
<dbReference type="InterPro" id="IPR005148">
    <property type="entry name" value="Arg-tRNA-synth_N"/>
</dbReference>
<dbReference type="InterPro" id="IPR036695">
    <property type="entry name" value="Arg-tRNA-synth_N_sf"/>
</dbReference>
<dbReference type="InterPro" id="IPR035684">
    <property type="entry name" value="ArgRS_core"/>
</dbReference>
<dbReference type="InterPro" id="IPR008909">
    <property type="entry name" value="DALR_anticod-bd"/>
</dbReference>
<dbReference type="InterPro" id="IPR014729">
    <property type="entry name" value="Rossmann-like_a/b/a_fold"/>
</dbReference>
<dbReference type="InterPro" id="IPR009080">
    <property type="entry name" value="tRNAsynth_Ia_anticodon-bd"/>
</dbReference>
<dbReference type="NCBIfam" id="TIGR00456">
    <property type="entry name" value="argS"/>
    <property type="match status" value="1"/>
</dbReference>
<dbReference type="PANTHER" id="PTHR11956:SF5">
    <property type="entry name" value="ARGININE--TRNA LIGASE, CYTOPLASMIC"/>
    <property type="match status" value="1"/>
</dbReference>
<dbReference type="PANTHER" id="PTHR11956">
    <property type="entry name" value="ARGINYL-TRNA SYNTHETASE"/>
    <property type="match status" value="1"/>
</dbReference>
<dbReference type="Pfam" id="PF03485">
    <property type="entry name" value="Arg_tRNA_synt_N"/>
    <property type="match status" value="1"/>
</dbReference>
<dbReference type="Pfam" id="PF05746">
    <property type="entry name" value="DALR_1"/>
    <property type="match status" value="1"/>
</dbReference>
<dbReference type="Pfam" id="PF00750">
    <property type="entry name" value="tRNA-synt_1d"/>
    <property type="match status" value="1"/>
</dbReference>
<dbReference type="PRINTS" id="PR01038">
    <property type="entry name" value="TRNASYNTHARG"/>
</dbReference>
<dbReference type="SMART" id="SM01016">
    <property type="entry name" value="Arg_tRNA_synt_N"/>
    <property type="match status" value="1"/>
</dbReference>
<dbReference type="SMART" id="SM00836">
    <property type="entry name" value="DALR_1"/>
    <property type="match status" value="1"/>
</dbReference>
<dbReference type="SUPFAM" id="SSF47323">
    <property type="entry name" value="Anticodon-binding domain of a subclass of class I aminoacyl-tRNA synthetases"/>
    <property type="match status" value="1"/>
</dbReference>
<dbReference type="SUPFAM" id="SSF55190">
    <property type="entry name" value="Arginyl-tRNA synthetase (ArgRS), N-terminal 'additional' domain"/>
    <property type="match status" value="1"/>
</dbReference>
<dbReference type="SUPFAM" id="SSF52374">
    <property type="entry name" value="Nucleotidylyl transferase"/>
    <property type="match status" value="1"/>
</dbReference>
<dbReference type="PROSITE" id="PS00178">
    <property type="entry name" value="AA_TRNA_LIGASE_I"/>
    <property type="match status" value="1"/>
</dbReference>
<accession>A4FXF3</accession>
<evidence type="ECO:0000255" key="1">
    <source>
        <dbReference type="HAMAP-Rule" id="MF_00123"/>
    </source>
</evidence>
<organism>
    <name type="scientific">Methanococcus maripaludis (strain C5 / ATCC BAA-1333)</name>
    <dbReference type="NCBI Taxonomy" id="402880"/>
    <lineage>
        <taxon>Archaea</taxon>
        <taxon>Methanobacteriati</taxon>
        <taxon>Methanobacteriota</taxon>
        <taxon>Methanomada group</taxon>
        <taxon>Methanococci</taxon>
        <taxon>Methanococcales</taxon>
        <taxon>Methanococcaceae</taxon>
        <taxon>Methanococcus</taxon>
    </lineage>
</organism>
<gene>
    <name evidence="1" type="primary">argS</name>
    <name type="ordered locus">MmarC5_0568</name>
</gene>